<name>PSD_CLOP1</name>
<reference key="1">
    <citation type="journal article" date="2006" name="Genome Res.">
        <title>Skewed genomic variability in strains of the toxigenic bacterial pathogen, Clostridium perfringens.</title>
        <authorList>
            <person name="Myers G.S.A."/>
            <person name="Rasko D.A."/>
            <person name="Cheung J.K."/>
            <person name="Ravel J."/>
            <person name="Seshadri R."/>
            <person name="DeBoy R.T."/>
            <person name="Ren Q."/>
            <person name="Varga J."/>
            <person name="Awad M.M."/>
            <person name="Brinkac L.M."/>
            <person name="Daugherty S.C."/>
            <person name="Haft D.H."/>
            <person name="Dodson R.J."/>
            <person name="Madupu R."/>
            <person name="Nelson W.C."/>
            <person name="Rosovitz M.J."/>
            <person name="Sullivan S.A."/>
            <person name="Khouri H."/>
            <person name="Dimitrov G.I."/>
            <person name="Watkins K.L."/>
            <person name="Mulligan S."/>
            <person name="Benton J."/>
            <person name="Radune D."/>
            <person name="Fisher D.J."/>
            <person name="Atkins H.S."/>
            <person name="Hiscox T."/>
            <person name="Jost B.H."/>
            <person name="Billington S.J."/>
            <person name="Songer J.G."/>
            <person name="McClane B.A."/>
            <person name="Titball R.W."/>
            <person name="Rood J.I."/>
            <person name="Melville S.B."/>
            <person name="Paulsen I.T."/>
        </authorList>
    </citation>
    <scope>NUCLEOTIDE SEQUENCE [LARGE SCALE GENOMIC DNA]</scope>
    <source>
        <strain>ATCC 13124 / DSM 756 / JCM 1290 / NCIMB 6125 / NCTC 8237 / S 107 / Type A</strain>
    </source>
</reference>
<proteinExistence type="inferred from homology"/>
<gene>
    <name evidence="1" type="primary">psd</name>
    <name type="ordered locus">CPF_0033</name>
</gene>
<comment type="function">
    <text evidence="1">Catalyzes the formation of phosphatidylethanolamine (PtdEtn) from phosphatidylserine (PtdSer).</text>
</comment>
<comment type="catalytic activity">
    <reaction evidence="1">
        <text>a 1,2-diacyl-sn-glycero-3-phospho-L-serine + H(+) = a 1,2-diacyl-sn-glycero-3-phosphoethanolamine + CO2</text>
        <dbReference type="Rhea" id="RHEA:20828"/>
        <dbReference type="ChEBI" id="CHEBI:15378"/>
        <dbReference type="ChEBI" id="CHEBI:16526"/>
        <dbReference type="ChEBI" id="CHEBI:57262"/>
        <dbReference type="ChEBI" id="CHEBI:64612"/>
        <dbReference type="EC" id="4.1.1.65"/>
    </reaction>
</comment>
<comment type="cofactor">
    <cofactor evidence="1">
        <name>pyruvate</name>
        <dbReference type="ChEBI" id="CHEBI:15361"/>
    </cofactor>
    <text evidence="1">Binds 1 pyruvoyl group covalently per subunit.</text>
</comment>
<comment type="pathway">
    <text evidence="1">Phospholipid metabolism; phosphatidylethanolamine biosynthesis; phosphatidylethanolamine from CDP-diacylglycerol: step 2/2.</text>
</comment>
<comment type="subunit">
    <text evidence="1">Heterodimer of a large membrane-associated beta subunit and a small pyruvoyl-containing alpha subunit.</text>
</comment>
<comment type="subcellular location">
    <subcellularLocation>
        <location evidence="1">Cell membrane</location>
        <topology evidence="1">Peripheral membrane protein</topology>
    </subcellularLocation>
</comment>
<comment type="PTM">
    <text evidence="1">Is synthesized initially as an inactive proenzyme. Formation of the active enzyme involves a self-maturation process in which the active site pyruvoyl group is generated from an internal serine residue via an autocatalytic post-translational modification. Two non-identical subunits are generated from the proenzyme in this reaction, and the pyruvate is formed at the N-terminus of the alpha chain, which is derived from the carboxyl end of the proenzyme. The autoendoproteolytic cleavage occurs by a canonical serine protease mechanism, in which the side chain hydroxyl group of the serine supplies its oxygen atom to form the C-terminus of the beta chain, while the remainder of the serine residue undergoes an oxidative deamination to produce ammonia and the pyruvoyl prosthetic group on the alpha chain. During this reaction, the Ser that is part of the protease active site of the proenzyme becomes the pyruvoyl prosthetic group, which constitutes an essential element of the active site of the mature decarboxylase.</text>
</comment>
<comment type="similarity">
    <text evidence="1">Belongs to the phosphatidylserine decarboxylase family. PSD-B subfamily. Prokaryotic type II sub-subfamily.</text>
</comment>
<dbReference type="EC" id="4.1.1.65" evidence="1"/>
<dbReference type="EMBL" id="CP000246">
    <property type="protein sequence ID" value="ABG82267.1"/>
    <property type="molecule type" value="Genomic_DNA"/>
</dbReference>
<dbReference type="RefSeq" id="WP_011590036.1">
    <property type="nucleotide sequence ID" value="NC_008261.1"/>
</dbReference>
<dbReference type="SMR" id="Q0TV39"/>
<dbReference type="STRING" id="195103.CPF_0033"/>
<dbReference type="PaxDb" id="195103-CPF_0033"/>
<dbReference type="KEGG" id="cpf:CPF_0033"/>
<dbReference type="eggNOG" id="COG0688">
    <property type="taxonomic scope" value="Bacteria"/>
</dbReference>
<dbReference type="HOGENOM" id="CLU_029061_2_2_9"/>
<dbReference type="UniPathway" id="UPA00558">
    <property type="reaction ID" value="UER00616"/>
</dbReference>
<dbReference type="Proteomes" id="UP000001823">
    <property type="component" value="Chromosome"/>
</dbReference>
<dbReference type="GO" id="GO:0005886">
    <property type="term" value="C:plasma membrane"/>
    <property type="evidence" value="ECO:0007669"/>
    <property type="project" value="UniProtKB-SubCell"/>
</dbReference>
<dbReference type="GO" id="GO:0004609">
    <property type="term" value="F:phosphatidylserine decarboxylase activity"/>
    <property type="evidence" value="ECO:0007669"/>
    <property type="project" value="UniProtKB-UniRule"/>
</dbReference>
<dbReference type="GO" id="GO:0006646">
    <property type="term" value="P:phosphatidylethanolamine biosynthetic process"/>
    <property type="evidence" value="ECO:0007669"/>
    <property type="project" value="UniProtKB-UniRule"/>
</dbReference>
<dbReference type="HAMAP" id="MF_00663">
    <property type="entry name" value="PS_decarb_PSD_B_type2"/>
    <property type="match status" value="1"/>
</dbReference>
<dbReference type="InterPro" id="IPR003817">
    <property type="entry name" value="PS_Dcarbxylase"/>
</dbReference>
<dbReference type="InterPro" id="IPR033177">
    <property type="entry name" value="PSD-B"/>
</dbReference>
<dbReference type="InterPro" id="IPR033179">
    <property type="entry name" value="PSD_type2_pro"/>
</dbReference>
<dbReference type="NCBIfam" id="NF001941">
    <property type="entry name" value="PRK00723.1"/>
    <property type="match status" value="1"/>
</dbReference>
<dbReference type="NCBIfam" id="TIGR00163">
    <property type="entry name" value="PS_decarb"/>
    <property type="match status" value="1"/>
</dbReference>
<dbReference type="PANTHER" id="PTHR10067">
    <property type="entry name" value="PHOSPHATIDYLSERINE DECARBOXYLASE"/>
    <property type="match status" value="1"/>
</dbReference>
<dbReference type="PANTHER" id="PTHR10067:SF17">
    <property type="entry name" value="PHOSPHATIDYLSERINE DECARBOXYLASE PROENZYME 2"/>
    <property type="match status" value="1"/>
</dbReference>
<dbReference type="Pfam" id="PF02666">
    <property type="entry name" value="PS_Dcarbxylase"/>
    <property type="match status" value="1"/>
</dbReference>
<accession>Q0TV39</accession>
<evidence type="ECO:0000255" key="1">
    <source>
        <dbReference type="HAMAP-Rule" id="MF_00663"/>
    </source>
</evidence>
<keyword id="KW-1003">Cell membrane</keyword>
<keyword id="KW-0210">Decarboxylase</keyword>
<keyword id="KW-0444">Lipid biosynthesis</keyword>
<keyword id="KW-0443">Lipid metabolism</keyword>
<keyword id="KW-0456">Lyase</keyword>
<keyword id="KW-0472">Membrane</keyword>
<keyword id="KW-0594">Phospholipid biosynthesis</keyword>
<keyword id="KW-1208">Phospholipid metabolism</keyword>
<keyword id="KW-0670">Pyruvate</keyword>
<keyword id="KW-0865">Zymogen</keyword>
<sequence length="294" mass="33596">MIKIYNRKTKAYDVEQVAGLKYINWSYASPIGKSFLELFIKKKMFSKLYGNFCDSSLSKKKIKAFIDEFNIDMSLCNKNIDEFENFNDFFARTLTPEARPIDYSENILISPGDGRLSAFENIDLNKVVQIKGYTYSLKELIDDPKVAEEFEGGTCLILRLCPTDYHRFHFVDSGTCSESKKISGFYYSVNPIALNNVSELFCKNKREWSIFNSDNFGKILHVEVGATCVGTILQTYSPEKRVKKGEEKGYFKFGGSTTILFFKKDTIKIDSDIVEQTKLGFETKVNMGETIGNK</sequence>
<organism>
    <name type="scientific">Clostridium perfringens (strain ATCC 13124 / DSM 756 / JCM 1290 / NCIMB 6125 / NCTC 8237 / Type A)</name>
    <dbReference type="NCBI Taxonomy" id="195103"/>
    <lineage>
        <taxon>Bacteria</taxon>
        <taxon>Bacillati</taxon>
        <taxon>Bacillota</taxon>
        <taxon>Clostridia</taxon>
        <taxon>Eubacteriales</taxon>
        <taxon>Clostridiaceae</taxon>
        <taxon>Clostridium</taxon>
    </lineage>
</organism>
<feature type="chain" id="PRO_1000026616" description="Phosphatidylserine decarboxylase beta chain" evidence="1">
    <location>
        <begin position="1"/>
        <end position="255"/>
    </location>
</feature>
<feature type="chain" id="PRO_1000026617" description="Phosphatidylserine decarboxylase alpha chain" evidence="1">
    <location>
        <begin position="256"/>
        <end position="294"/>
    </location>
</feature>
<feature type="active site" description="Charge relay system; for autoendoproteolytic cleavage activity" evidence="1">
    <location>
        <position position="113"/>
    </location>
</feature>
<feature type="active site" description="Charge relay system; for autoendoproteolytic cleavage activity" evidence="1">
    <location>
        <position position="169"/>
    </location>
</feature>
<feature type="active site" description="Charge relay system; for autoendoproteolytic cleavage activity" evidence="1">
    <location>
        <position position="256"/>
    </location>
</feature>
<feature type="active site" description="Schiff-base intermediate with substrate; via pyruvic acid; for decarboxylase activity" evidence="1">
    <location>
        <position position="256"/>
    </location>
</feature>
<feature type="site" description="Cleavage (non-hydrolytic); by autocatalysis" evidence="1">
    <location>
        <begin position="255"/>
        <end position="256"/>
    </location>
</feature>
<feature type="modified residue" description="Pyruvic acid (Ser); by autocatalysis" evidence="1">
    <location>
        <position position="256"/>
    </location>
</feature>
<protein>
    <recommendedName>
        <fullName evidence="1">Phosphatidylserine decarboxylase proenzyme</fullName>
        <ecNumber evidence="1">4.1.1.65</ecNumber>
    </recommendedName>
    <component>
        <recommendedName>
            <fullName evidence="1">Phosphatidylserine decarboxylase alpha chain</fullName>
        </recommendedName>
    </component>
    <component>
        <recommendedName>
            <fullName evidence="1">Phosphatidylserine decarboxylase beta chain</fullName>
        </recommendedName>
    </component>
</protein>